<accession>A0QHI1</accession>
<reference key="1">
    <citation type="submission" date="2006-10" db="EMBL/GenBank/DDBJ databases">
        <authorList>
            <person name="Fleischmann R.D."/>
            <person name="Dodson R.J."/>
            <person name="Haft D.H."/>
            <person name="Merkel J.S."/>
            <person name="Nelson W.C."/>
            <person name="Fraser C.M."/>
        </authorList>
    </citation>
    <scope>NUCLEOTIDE SEQUENCE [LARGE SCALE GENOMIC DNA]</scope>
    <source>
        <strain>104</strain>
    </source>
</reference>
<feature type="chain" id="PRO_0000319775" description="Histidinol-phosphate aminotransferase">
    <location>
        <begin position="1"/>
        <end position="398"/>
    </location>
</feature>
<feature type="region of interest" description="Disordered" evidence="2">
    <location>
        <begin position="1"/>
        <end position="30"/>
    </location>
</feature>
<feature type="compositionally biased region" description="Polar residues" evidence="2">
    <location>
        <begin position="1"/>
        <end position="10"/>
    </location>
</feature>
<feature type="modified residue" description="N6-(pyridoxal phosphate)lysine" evidence="1">
    <location>
        <position position="234"/>
    </location>
</feature>
<proteinExistence type="inferred from homology"/>
<evidence type="ECO:0000255" key="1">
    <source>
        <dbReference type="HAMAP-Rule" id="MF_01023"/>
    </source>
</evidence>
<evidence type="ECO:0000256" key="2">
    <source>
        <dbReference type="SAM" id="MobiDB-lite"/>
    </source>
</evidence>
<keyword id="KW-0028">Amino-acid biosynthesis</keyword>
<keyword id="KW-0032">Aminotransferase</keyword>
<keyword id="KW-0368">Histidine biosynthesis</keyword>
<keyword id="KW-0663">Pyridoxal phosphate</keyword>
<keyword id="KW-0808">Transferase</keyword>
<comment type="catalytic activity">
    <reaction evidence="1">
        <text>L-histidinol phosphate + 2-oxoglutarate = 3-(imidazol-4-yl)-2-oxopropyl phosphate + L-glutamate</text>
        <dbReference type="Rhea" id="RHEA:23744"/>
        <dbReference type="ChEBI" id="CHEBI:16810"/>
        <dbReference type="ChEBI" id="CHEBI:29985"/>
        <dbReference type="ChEBI" id="CHEBI:57766"/>
        <dbReference type="ChEBI" id="CHEBI:57980"/>
        <dbReference type="EC" id="2.6.1.9"/>
    </reaction>
</comment>
<comment type="cofactor">
    <cofactor evidence="1">
        <name>pyridoxal 5'-phosphate</name>
        <dbReference type="ChEBI" id="CHEBI:597326"/>
    </cofactor>
</comment>
<comment type="pathway">
    <text evidence="1">Amino-acid biosynthesis; L-histidine biosynthesis; L-histidine from 5-phospho-alpha-D-ribose 1-diphosphate: step 7/9.</text>
</comment>
<comment type="subunit">
    <text evidence="1">Homodimer.</text>
</comment>
<comment type="similarity">
    <text evidence="1">Belongs to the class-II pyridoxal-phosphate-dependent aminotransferase family. Histidinol-phosphate aminotransferase subfamily.</text>
</comment>
<sequence>MTGQRATPQPTLDDLPLRDDLRGKSPYGAPQLAVPVRLNTNENPHPPSRALVDDVVRSVARAAADLHRYPDRDAVQLRSDLARYLTAQTGVQLGVENLWAANGSNEILQQLLQAFGGPGRSAIGFVPSYSMHPIISDGTRTEWLQAARADDFSLDVDAAVAAVTERTPDVVFVASPNNPSGQSVSLSGLRRLLDAAPGIVIVDEAYGEFSSQPSAVQLVGEYPTKLVVTRTMSKAFAFAGGRLGYLIATPAVIEAMLLVRLPYHLSSVTQAAARAALRHADDTLGSVAALIAERERVSTALTGMGFRVIPSDANFVLFGEFTDAPASWQRYLDAGVLIRDVGIPGYLRATTGLAEENDAFLRASAQLAATELAPVNVGAIASAAEPRAAGRDHVLGAP</sequence>
<organism>
    <name type="scientific">Mycobacterium avium (strain 104)</name>
    <dbReference type="NCBI Taxonomy" id="243243"/>
    <lineage>
        <taxon>Bacteria</taxon>
        <taxon>Bacillati</taxon>
        <taxon>Actinomycetota</taxon>
        <taxon>Actinomycetes</taxon>
        <taxon>Mycobacteriales</taxon>
        <taxon>Mycobacteriaceae</taxon>
        <taxon>Mycobacterium</taxon>
        <taxon>Mycobacterium avium complex (MAC)</taxon>
    </lineage>
</organism>
<dbReference type="EC" id="2.6.1.9" evidence="1"/>
<dbReference type="EMBL" id="CP000479">
    <property type="protein sequence ID" value="ABK68288.1"/>
    <property type="molecule type" value="Genomic_DNA"/>
</dbReference>
<dbReference type="RefSeq" id="WP_011725310.1">
    <property type="nucleotide sequence ID" value="NC_008595.1"/>
</dbReference>
<dbReference type="SMR" id="A0QHI1"/>
<dbReference type="KEGG" id="mav:MAV_3186"/>
<dbReference type="HOGENOM" id="CLU_017584_3_1_11"/>
<dbReference type="UniPathway" id="UPA00031">
    <property type="reaction ID" value="UER00012"/>
</dbReference>
<dbReference type="Proteomes" id="UP000001574">
    <property type="component" value="Chromosome"/>
</dbReference>
<dbReference type="GO" id="GO:0004400">
    <property type="term" value="F:histidinol-phosphate transaminase activity"/>
    <property type="evidence" value="ECO:0007669"/>
    <property type="project" value="UniProtKB-UniRule"/>
</dbReference>
<dbReference type="GO" id="GO:0030170">
    <property type="term" value="F:pyridoxal phosphate binding"/>
    <property type="evidence" value="ECO:0007669"/>
    <property type="project" value="InterPro"/>
</dbReference>
<dbReference type="GO" id="GO:0000105">
    <property type="term" value="P:L-histidine biosynthetic process"/>
    <property type="evidence" value="ECO:0007669"/>
    <property type="project" value="UniProtKB-UniRule"/>
</dbReference>
<dbReference type="CDD" id="cd00609">
    <property type="entry name" value="AAT_like"/>
    <property type="match status" value="1"/>
</dbReference>
<dbReference type="Gene3D" id="3.90.1150.10">
    <property type="entry name" value="Aspartate Aminotransferase, domain 1"/>
    <property type="match status" value="1"/>
</dbReference>
<dbReference type="Gene3D" id="3.40.640.10">
    <property type="entry name" value="Type I PLP-dependent aspartate aminotransferase-like (Major domain)"/>
    <property type="match status" value="1"/>
</dbReference>
<dbReference type="HAMAP" id="MF_01023">
    <property type="entry name" value="HisC_aminotrans_2"/>
    <property type="match status" value="1"/>
</dbReference>
<dbReference type="InterPro" id="IPR001917">
    <property type="entry name" value="Aminotrans_II_pyridoxalP_BS"/>
</dbReference>
<dbReference type="InterPro" id="IPR004839">
    <property type="entry name" value="Aminotransferase_I/II_large"/>
</dbReference>
<dbReference type="InterPro" id="IPR005861">
    <property type="entry name" value="HisP_aminotrans"/>
</dbReference>
<dbReference type="InterPro" id="IPR015424">
    <property type="entry name" value="PyrdxlP-dep_Trfase"/>
</dbReference>
<dbReference type="InterPro" id="IPR015421">
    <property type="entry name" value="PyrdxlP-dep_Trfase_major"/>
</dbReference>
<dbReference type="InterPro" id="IPR015422">
    <property type="entry name" value="PyrdxlP-dep_Trfase_small"/>
</dbReference>
<dbReference type="NCBIfam" id="TIGR01141">
    <property type="entry name" value="hisC"/>
    <property type="match status" value="1"/>
</dbReference>
<dbReference type="NCBIfam" id="NF002877">
    <property type="entry name" value="PRK03317.1"/>
    <property type="match status" value="1"/>
</dbReference>
<dbReference type="PANTHER" id="PTHR42885:SF2">
    <property type="entry name" value="HISTIDINOL-PHOSPHATE AMINOTRANSFERASE"/>
    <property type="match status" value="1"/>
</dbReference>
<dbReference type="PANTHER" id="PTHR42885">
    <property type="entry name" value="HISTIDINOL-PHOSPHATE AMINOTRANSFERASE-RELATED"/>
    <property type="match status" value="1"/>
</dbReference>
<dbReference type="Pfam" id="PF00155">
    <property type="entry name" value="Aminotran_1_2"/>
    <property type="match status" value="1"/>
</dbReference>
<dbReference type="SUPFAM" id="SSF53383">
    <property type="entry name" value="PLP-dependent transferases"/>
    <property type="match status" value="1"/>
</dbReference>
<dbReference type="PROSITE" id="PS00599">
    <property type="entry name" value="AA_TRANSFER_CLASS_2"/>
    <property type="match status" value="1"/>
</dbReference>
<gene>
    <name evidence="1" type="primary">hisC</name>
    <name type="ordered locus">MAV_3186</name>
</gene>
<protein>
    <recommendedName>
        <fullName evidence="1">Histidinol-phosphate aminotransferase</fullName>
        <ecNumber evidence="1">2.6.1.9</ecNumber>
    </recommendedName>
    <alternativeName>
        <fullName evidence="1">Imidazole acetol-phosphate transaminase</fullName>
    </alternativeName>
</protein>
<name>HIS8_MYCA1</name>